<proteinExistence type="evidence at transcript level"/>
<name>ACMSD_BOVIN</name>
<accession>Q0II68</accession>
<dbReference type="EC" id="4.1.1.45"/>
<dbReference type="EMBL" id="BC122781">
    <property type="protein sequence ID" value="AAI22782.1"/>
    <property type="molecule type" value="mRNA"/>
</dbReference>
<dbReference type="RefSeq" id="NP_001069162.1">
    <property type="nucleotide sequence ID" value="NM_001075694.1"/>
</dbReference>
<dbReference type="SMR" id="Q0II68"/>
<dbReference type="FunCoup" id="Q0II68">
    <property type="interactions" value="103"/>
</dbReference>
<dbReference type="STRING" id="9913.ENSBTAP00000010575"/>
<dbReference type="PaxDb" id="9913-ENSBTAP00000010575"/>
<dbReference type="Ensembl" id="ENSBTAT00000010575.6">
    <property type="protein sequence ID" value="ENSBTAP00000010575.5"/>
    <property type="gene ID" value="ENSBTAG00000008039.7"/>
</dbReference>
<dbReference type="GeneID" id="515030"/>
<dbReference type="KEGG" id="bta:515030"/>
<dbReference type="CTD" id="130013"/>
<dbReference type="VEuPathDB" id="HostDB:ENSBTAG00000008039"/>
<dbReference type="VGNC" id="VGNC:25544">
    <property type="gene designation" value="ACMSD"/>
</dbReference>
<dbReference type="eggNOG" id="KOG4245">
    <property type="taxonomic scope" value="Eukaryota"/>
</dbReference>
<dbReference type="GeneTree" id="ENSGT00490000043417"/>
<dbReference type="HOGENOM" id="CLU_039329_1_2_1"/>
<dbReference type="InParanoid" id="Q0II68"/>
<dbReference type="OMA" id="RIESCIM"/>
<dbReference type="OrthoDB" id="191270at2759"/>
<dbReference type="TreeFam" id="TF313232"/>
<dbReference type="UniPathway" id="UPA00270"/>
<dbReference type="Proteomes" id="UP000009136">
    <property type="component" value="Chromosome 2"/>
</dbReference>
<dbReference type="Bgee" id="ENSBTAG00000008039">
    <property type="expression patterns" value="Expressed in metanephros cortex and 29 other cell types or tissues"/>
</dbReference>
<dbReference type="GO" id="GO:0005737">
    <property type="term" value="C:cytoplasm"/>
    <property type="evidence" value="ECO:0000318"/>
    <property type="project" value="GO_Central"/>
</dbReference>
<dbReference type="GO" id="GO:0005829">
    <property type="term" value="C:cytosol"/>
    <property type="evidence" value="ECO:0000250"/>
    <property type="project" value="UniProtKB"/>
</dbReference>
<dbReference type="GO" id="GO:0001760">
    <property type="term" value="F:aminocarboxymuconate-semialdehyde decarboxylase activity"/>
    <property type="evidence" value="ECO:0000250"/>
    <property type="project" value="UniProtKB"/>
</dbReference>
<dbReference type="GO" id="GO:0016787">
    <property type="term" value="F:hydrolase activity"/>
    <property type="evidence" value="ECO:0007669"/>
    <property type="project" value="InterPro"/>
</dbReference>
<dbReference type="GO" id="GO:0008270">
    <property type="term" value="F:zinc ion binding"/>
    <property type="evidence" value="ECO:0007669"/>
    <property type="project" value="Ensembl"/>
</dbReference>
<dbReference type="GO" id="GO:1904985">
    <property type="term" value="P:negative regulation of quinolinate biosynthetic process"/>
    <property type="evidence" value="ECO:0000250"/>
    <property type="project" value="UniProtKB"/>
</dbReference>
<dbReference type="GO" id="GO:0019748">
    <property type="term" value="P:secondary metabolic process"/>
    <property type="evidence" value="ECO:0000318"/>
    <property type="project" value="GO_Central"/>
</dbReference>
<dbReference type="CDD" id="cd01292">
    <property type="entry name" value="metallo-dependent_hydrolases"/>
    <property type="match status" value="1"/>
</dbReference>
<dbReference type="FunFam" id="3.20.20.140:FF:000029">
    <property type="entry name" value="2-amino-3-carboxymuconate-6-semialdehyde decarboxylase"/>
    <property type="match status" value="1"/>
</dbReference>
<dbReference type="Gene3D" id="3.20.20.140">
    <property type="entry name" value="Metal-dependent hydrolases"/>
    <property type="match status" value="1"/>
</dbReference>
<dbReference type="InterPro" id="IPR032465">
    <property type="entry name" value="ACMSD"/>
</dbReference>
<dbReference type="InterPro" id="IPR006680">
    <property type="entry name" value="Amidohydro-rel"/>
</dbReference>
<dbReference type="InterPro" id="IPR032466">
    <property type="entry name" value="Metal_Hydrolase"/>
</dbReference>
<dbReference type="PANTHER" id="PTHR21240">
    <property type="entry name" value="2-AMINO-3-CARBOXYLMUCONATE-6-SEMIALDEHYDE DECARBOXYLASE"/>
    <property type="match status" value="1"/>
</dbReference>
<dbReference type="PANTHER" id="PTHR21240:SF27">
    <property type="entry name" value="2-AMINO-3-CARBOXYMUCONATE-6-SEMIALDEHYDE DECARBOXYLASE"/>
    <property type="match status" value="1"/>
</dbReference>
<dbReference type="Pfam" id="PF04909">
    <property type="entry name" value="Amidohydro_2"/>
    <property type="match status" value="1"/>
</dbReference>
<dbReference type="SUPFAM" id="SSF51556">
    <property type="entry name" value="Metallo-dependent hydrolases"/>
    <property type="match status" value="1"/>
</dbReference>
<keyword id="KW-0210">Decarboxylase</keyword>
<keyword id="KW-0456">Lyase</keyword>
<keyword id="KW-0479">Metal-binding</keyword>
<keyword id="KW-1185">Reference proteome</keyword>
<keyword id="KW-0862">Zinc</keyword>
<sequence length="336" mass="37923">MKIDIHTHILPREWPDLKKRFGYGGWVQLQHNGKGEAKMLKDGKVFRVVQENCWDPEARLREMDQTGVTVQALSTVPVMFSYWAKPQDTLDLCQLLNNDLAATIASHPRRFVGLGTLPMQAPELAVKEMERCVRKLGFPGVQIGSHINEWDLNARELFPVYAEAERLNCSLFVHPWDMQMDGRMAKYWFPWLIGMPAETTAAICSMIMGGVFEKFPKLKVCFAHGGGSFPFTVGRISHGFSMRPDLCAQDNPTNPKKYLGSFYTDSLVHDPLALKLLTDVIGKDKVILGTDYPFPLGELEPGKLIESMGEFDAETKDKLKAGNALEFLGLERKQFE</sequence>
<protein>
    <recommendedName>
        <fullName>2-amino-3-carboxymuconate-6-semialdehyde decarboxylase</fullName>
        <ecNumber>4.1.1.45</ecNumber>
    </recommendedName>
    <alternativeName>
        <fullName>Picolinate carboxylase</fullName>
    </alternativeName>
</protein>
<organism>
    <name type="scientific">Bos taurus</name>
    <name type="common">Bovine</name>
    <dbReference type="NCBI Taxonomy" id="9913"/>
    <lineage>
        <taxon>Eukaryota</taxon>
        <taxon>Metazoa</taxon>
        <taxon>Chordata</taxon>
        <taxon>Craniata</taxon>
        <taxon>Vertebrata</taxon>
        <taxon>Euteleostomi</taxon>
        <taxon>Mammalia</taxon>
        <taxon>Eutheria</taxon>
        <taxon>Laurasiatheria</taxon>
        <taxon>Artiodactyla</taxon>
        <taxon>Ruminantia</taxon>
        <taxon>Pecora</taxon>
        <taxon>Bovidae</taxon>
        <taxon>Bovinae</taxon>
        <taxon>Bos</taxon>
    </lineage>
</organism>
<reference key="1">
    <citation type="submission" date="2006-08" db="EMBL/GenBank/DDBJ databases">
        <authorList>
            <consortium name="NIH - Mammalian Gene Collection (MGC) project"/>
        </authorList>
    </citation>
    <scope>NUCLEOTIDE SEQUENCE [LARGE SCALE MRNA]</scope>
    <source>
        <strain>Crossbred X Angus</strain>
        <tissue>Liver</tissue>
    </source>
</reference>
<comment type="function">
    <text evidence="1">Converts alpha-amino-beta-carboxymuconate-epsilon-semialdehyde (ACMS) to alpha-aminomuconate semialdehyde (AMS). ACMS can be converted non-enzymatically to quinolate (QA), a key precursor of NAD, and a potent endogenous excitotoxin of neuronal cells which is implicated in the pathogenesis of various neurodegenerative disorders. In the presence of ACMSD, ACMS is converted to AMS, a benign catabolite. ACMSD ultimately controls the metabolic fate of tryptophan catabolism along the kynurenine pathway (By similarity).</text>
</comment>
<comment type="catalytic activity">
    <reaction>
        <text>2-amino-3-carboxymuconate 6-semialdehyde + H(+) = 2-aminomuconate 6-semialdehyde + CO2</text>
        <dbReference type="Rhea" id="RHEA:16557"/>
        <dbReference type="ChEBI" id="CHEBI:15378"/>
        <dbReference type="ChEBI" id="CHEBI:16526"/>
        <dbReference type="ChEBI" id="CHEBI:77634"/>
        <dbReference type="ChEBI" id="CHEBI:77803"/>
        <dbReference type="EC" id="4.1.1.45"/>
    </reaction>
</comment>
<comment type="pathway">
    <text>Secondary metabolite metabolism; quinolate metabolism.</text>
</comment>
<comment type="subunit">
    <text evidence="1">Monomer.</text>
</comment>
<comment type="similarity">
    <text evidence="2">Belongs to the metallo-dependent hydrolases superfamily. ACMSD family.</text>
</comment>
<feature type="chain" id="PRO_0000270786" description="2-amino-3-carboxymuconate-6-semialdehyde decarboxylase">
    <location>
        <begin position="1"/>
        <end position="336"/>
    </location>
</feature>
<feature type="binding site" evidence="1">
    <location>
        <position position="6"/>
    </location>
    <ligand>
        <name>Zn(2+)</name>
        <dbReference type="ChEBI" id="CHEBI:29105"/>
    </ligand>
</feature>
<feature type="binding site" evidence="1">
    <location>
        <position position="8"/>
    </location>
    <ligand>
        <name>Zn(2+)</name>
        <dbReference type="ChEBI" id="CHEBI:29105"/>
    </ligand>
</feature>
<feature type="binding site" evidence="1">
    <location>
        <position position="47"/>
    </location>
    <ligand>
        <name>substrate</name>
    </ligand>
</feature>
<feature type="binding site" evidence="1">
    <location>
        <position position="174"/>
    </location>
    <ligand>
        <name>Zn(2+)</name>
        <dbReference type="ChEBI" id="CHEBI:29105"/>
    </ligand>
</feature>
<feature type="binding site" evidence="1">
    <location>
        <position position="291"/>
    </location>
    <ligand>
        <name>Zn(2+)</name>
        <dbReference type="ChEBI" id="CHEBI:29105"/>
    </ligand>
</feature>
<evidence type="ECO:0000250" key="1"/>
<evidence type="ECO:0000305" key="2"/>
<gene>
    <name type="primary">ACMSD</name>
</gene>